<protein>
    <recommendedName>
        <fullName evidence="1">Phosphomethylpyrimidine synthase</fullName>
        <ecNumber evidence="1">4.1.99.17</ecNumber>
    </recommendedName>
    <alternativeName>
        <fullName evidence="1">Hydroxymethylpyrimidine phosphate synthase</fullName>
        <shortName evidence="1">HMP-P synthase</shortName>
        <shortName evidence="1">HMP-phosphate synthase</shortName>
        <shortName evidence="1">HMPP synthase</shortName>
    </alternativeName>
    <alternativeName>
        <fullName evidence="1">Thiamine biosynthesis protein ThiC</fullName>
    </alternativeName>
</protein>
<evidence type="ECO:0000255" key="1">
    <source>
        <dbReference type="HAMAP-Rule" id="MF_00089"/>
    </source>
</evidence>
<evidence type="ECO:0000305" key="2"/>
<accession>Q8FB77</accession>
<name>THIC_ECOL6</name>
<proteinExistence type="inferred from homology"/>
<dbReference type="EC" id="4.1.99.17" evidence="1"/>
<dbReference type="EMBL" id="AE014075">
    <property type="protein sequence ID" value="AAN83379.1"/>
    <property type="status" value="ALT_INIT"/>
    <property type="molecule type" value="Genomic_DNA"/>
</dbReference>
<dbReference type="RefSeq" id="WP_001305321.1">
    <property type="nucleotide sequence ID" value="NZ_CP051263.1"/>
</dbReference>
<dbReference type="SMR" id="Q8FB77"/>
<dbReference type="STRING" id="199310.c4951"/>
<dbReference type="KEGG" id="ecc:c4951"/>
<dbReference type="eggNOG" id="COG0422">
    <property type="taxonomic scope" value="Bacteria"/>
</dbReference>
<dbReference type="HOGENOM" id="CLU_013181_2_1_6"/>
<dbReference type="UniPathway" id="UPA00060"/>
<dbReference type="Proteomes" id="UP000001410">
    <property type="component" value="Chromosome"/>
</dbReference>
<dbReference type="GO" id="GO:0005829">
    <property type="term" value="C:cytosol"/>
    <property type="evidence" value="ECO:0007669"/>
    <property type="project" value="TreeGrafter"/>
</dbReference>
<dbReference type="GO" id="GO:0051539">
    <property type="term" value="F:4 iron, 4 sulfur cluster binding"/>
    <property type="evidence" value="ECO:0007669"/>
    <property type="project" value="UniProtKB-KW"/>
</dbReference>
<dbReference type="GO" id="GO:0016830">
    <property type="term" value="F:carbon-carbon lyase activity"/>
    <property type="evidence" value="ECO:0007669"/>
    <property type="project" value="InterPro"/>
</dbReference>
<dbReference type="GO" id="GO:0008270">
    <property type="term" value="F:zinc ion binding"/>
    <property type="evidence" value="ECO:0007669"/>
    <property type="project" value="UniProtKB-UniRule"/>
</dbReference>
<dbReference type="GO" id="GO:0009228">
    <property type="term" value="P:thiamine biosynthetic process"/>
    <property type="evidence" value="ECO:0007669"/>
    <property type="project" value="UniProtKB-KW"/>
</dbReference>
<dbReference type="GO" id="GO:0009229">
    <property type="term" value="P:thiamine diphosphate biosynthetic process"/>
    <property type="evidence" value="ECO:0007669"/>
    <property type="project" value="UniProtKB-UniRule"/>
</dbReference>
<dbReference type="FunFam" id="3.20.20.540:FF:000001">
    <property type="entry name" value="Phosphomethylpyrimidine synthase"/>
    <property type="match status" value="1"/>
</dbReference>
<dbReference type="Gene3D" id="6.10.250.620">
    <property type="match status" value="1"/>
</dbReference>
<dbReference type="Gene3D" id="3.20.20.540">
    <property type="entry name" value="Radical SAM ThiC family, central domain"/>
    <property type="match status" value="1"/>
</dbReference>
<dbReference type="HAMAP" id="MF_00089">
    <property type="entry name" value="ThiC"/>
    <property type="match status" value="1"/>
</dbReference>
<dbReference type="InterPro" id="IPR037509">
    <property type="entry name" value="ThiC"/>
</dbReference>
<dbReference type="InterPro" id="IPR025747">
    <property type="entry name" value="ThiC-associated_dom"/>
</dbReference>
<dbReference type="InterPro" id="IPR038521">
    <property type="entry name" value="ThiC/Bza_core_dom"/>
</dbReference>
<dbReference type="InterPro" id="IPR002817">
    <property type="entry name" value="ThiC/BzaA/B"/>
</dbReference>
<dbReference type="NCBIfam" id="NF006763">
    <property type="entry name" value="PRK09284.1"/>
    <property type="match status" value="1"/>
</dbReference>
<dbReference type="NCBIfam" id="NF009895">
    <property type="entry name" value="PRK13352.1"/>
    <property type="match status" value="1"/>
</dbReference>
<dbReference type="NCBIfam" id="TIGR00190">
    <property type="entry name" value="thiC"/>
    <property type="match status" value="1"/>
</dbReference>
<dbReference type="PANTHER" id="PTHR30557:SF1">
    <property type="entry name" value="PHOSPHOMETHYLPYRIMIDINE SYNTHASE, CHLOROPLASTIC"/>
    <property type="match status" value="1"/>
</dbReference>
<dbReference type="PANTHER" id="PTHR30557">
    <property type="entry name" value="THIAMINE BIOSYNTHESIS PROTEIN THIC"/>
    <property type="match status" value="1"/>
</dbReference>
<dbReference type="Pfam" id="PF13667">
    <property type="entry name" value="ThiC-associated"/>
    <property type="match status" value="1"/>
</dbReference>
<dbReference type="Pfam" id="PF01964">
    <property type="entry name" value="ThiC_Rad_SAM"/>
    <property type="match status" value="1"/>
</dbReference>
<dbReference type="SFLD" id="SFLDF00407">
    <property type="entry name" value="phosphomethylpyrimidine_syntha"/>
    <property type="match status" value="1"/>
</dbReference>
<dbReference type="SFLD" id="SFLDG01114">
    <property type="entry name" value="phosphomethylpyrimidine_syntha"/>
    <property type="match status" value="1"/>
</dbReference>
<dbReference type="SFLD" id="SFLDS00113">
    <property type="entry name" value="Radical_SAM_Phosphomethylpyrim"/>
    <property type="match status" value="1"/>
</dbReference>
<comment type="function">
    <text evidence="1">Catalyzes the synthesis of the hydroxymethylpyrimidine phosphate (HMP-P) moiety of thiamine from aminoimidazole ribotide (AIR) in a radical S-adenosyl-L-methionine (SAM)-dependent reaction.</text>
</comment>
<comment type="catalytic activity">
    <reaction evidence="1">
        <text>5-amino-1-(5-phospho-beta-D-ribosyl)imidazole + S-adenosyl-L-methionine = 4-amino-2-methyl-5-(phosphooxymethyl)pyrimidine + CO + 5'-deoxyadenosine + formate + L-methionine + 3 H(+)</text>
        <dbReference type="Rhea" id="RHEA:24840"/>
        <dbReference type="ChEBI" id="CHEBI:15378"/>
        <dbReference type="ChEBI" id="CHEBI:15740"/>
        <dbReference type="ChEBI" id="CHEBI:17245"/>
        <dbReference type="ChEBI" id="CHEBI:17319"/>
        <dbReference type="ChEBI" id="CHEBI:57844"/>
        <dbReference type="ChEBI" id="CHEBI:58354"/>
        <dbReference type="ChEBI" id="CHEBI:59789"/>
        <dbReference type="ChEBI" id="CHEBI:137981"/>
        <dbReference type="EC" id="4.1.99.17"/>
    </reaction>
</comment>
<comment type="cofactor">
    <cofactor evidence="1">
        <name>[4Fe-4S] cluster</name>
        <dbReference type="ChEBI" id="CHEBI:49883"/>
    </cofactor>
    <text evidence="1">Binds 1 [4Fe-4S] cluster per subunit. The cluster is coordinated with 3 cysteines and an exchangeable S-adenosyl-L-methionine.</text>
</comment>
<comment type="pathway">
    <text evidence="1">Cofactor biosynthesis; thiamine diphosphate biosynthesis.</text>
</comment>
<comment type="subunit">
    <text evidence="1">Homodimer.</text>
</comment>
<comment type="similarity">
    <text evidence="1">Belongs to the ThiC family.</text>
</comment>
<comment type="sequence caution" evidence="2">
    <conflict type="erroneous initiation">
        <sequence resource="EMBL-CDS" id="AAN83379"/>
    </conflict>
</comment>
<reference key="1">
    <citation type="journal article" date="2002" name="Proc. Natl. Acad. Sci. U.S.A.">
        <title>Extensive mosaic structure revealed by the complete genome sequence of uropathogenic Escherichia coli.</title>
        <authorList>
            <person name="Welch R.A."/>
            <person name="Burland V."/>
            <person name="Plunkett G. III"/>
            <person name="Redford P."/>
            <person name="Roesch P."/>
            <person name="Rasko D."/>
            <person name="Buckles E.L."/>
            <person name="Liou S.-R."/>
            <person name="Boutin A."/>
            <person name="Hackett J."/>
            <person name="Stroud D."/>
            <person name="Mayhew G.F."/>
            <person name="Rose D.J."/>
            <person name="Zhou S."/>
            <person name="Schwartz D.C."/>
            <person name="Perna N.T."/>
            <person name="Mobley H.L.T."/>
            <person name="Donnenberg M.S."/>
            <person name="Blattner F.R."/>
        </authorList>
    </citation>
    <scope>NUCLEOTIDE SEQUENCE [LARGE SCALE GENOMIC DNA]</scope>
    <source>
        <strain>CFT073 / ATCC 700928 / UPEC</strain>
    </source>
</reference>
<sequence>MSATKLTRREQRAQAQHFIDTLEGSAFPNSKRIYITATQPGVRVPMREIQLSPTLIGGSKEQPQYEENEAIPVYDTSGPYGDPQIAINVQQGLAKLRQPWIDARGDTEELTVRSSDYTKARLADDGLDELRFSGVLTPKRAKAGRRVTQLHYARQGIITPEMEFIAIRENMGRERIRSEVLRHQHPGMSFGARLPENITAEFVRDEVAAGRAIIPANINHPESEPMIIGRNFLVKVNANIGNSAVTSSIEEEVEKLVWSTRWGADTVMDLSTGRYIHETREWILRNSPVPIGTVPIYQALEKVNGIAEDLTWEVFRDTLLEQAEQGVDYFTIHAGVLLRYVPMTAKRLTGIVSRGGSIMAKWCLSHHQENFLYQHFREICEICAAYDVSLSLGDGLRPGSIQDANDEAQFAELHTLGELTKIAWEYDVQVMIEGPGHVPMQMIRRNMTEELEHCHEAPFYTLGPLTTDIAPGYDHFTSGIGAAMIGWFGCAMLCYVTPKEHLGLPNKEDVKQGLITYKIAAHAADLAKGHPGAQIRDNAMSKARFEFRWEDQFNLALDPFTARAYHDETLPQESGKVAHFCSMCGPKFCSMKISQEVRDYAAAQTIEVGMADMSENFRARGGEIYLRKEEA</sequence>
<feature type="chain" id="PRO_0000152805" description="Phosphomethylpyrimidine synthase">
    <location>
        <begin position="1"/>
        <end position="631"/>
    </location>
</feature>
<feature type="binding site" evidence="1">
    <location>
        <position position="239"/>
    </location>
    <ligand>
        <name>substrate</name>
    </ligand>
</feature>
<feature type="binding site" evidence="1">
    <location>
        <position position="268"/>
    </location>
    <ligand>
        <name>substrate</name>
    </ligand>
</feature>
<feature type="binding site" evidence="1">
    <location>
        <position position="297"/>
    </location>
    <ligand>
        <name>substrate</name>
    </ligand>
</feature>
<feature type="binding site" evidence="1">
    <location>
        <position position="333"/>
    </location>
    <ligand>
        <name>substrate</name>
    </ligand>
</feature>
<feature type="binding site" evidence="1">
    <location>
        <begin position="353"/>
        <end position="355"/>
    </location>
    <ligand>
        <name>substrate</name>
    </ligand>
</feature>
<feature type="binding site" evidence="1">
    <location>
        <begin position="394"/>
        <end position="397"/>
    </location>
    <ligand>
        <name>substrate</name>
    </ligand>
</feature>
<feature type="binding site" evidence="1">
    <location>
        <position position="433"/>
    </location>
    <ligand>
        <name>substrate</name>
    </ligand>
</feature>
<feature type="binding site" evidence="1">
    <location>
        <position position="437"/>
    </location>
    <ligand>
        <name>Zn(2+)</name>
        <dbReference type="ChEBI" id="CHEBI:29105"/>
    </ligand>
</feature>
<feature type="binding site" evidence="1">
    <location>
        <position position="460"/>
    </location>
    <ligand>
        <name>substrate</name>
    </ligand>
</feature>
<feature type="binding site" evidence="1">
    <location>
        <position position="501"/>
    </location>
    <ligand>
        <name>Zn(2+)</name>
        <dbReference type="ChEBI" id="CHEBI:29105"/>
    </ligand>
</feature>
<feature type="binding site" evidence="1">
    <location>
        <position position="581"/>
    </location>
    <ligand>
        <name>[4Fe-4S] cluster</name>
        <dbReference type="ChEBI" id="CHEBI:49883"/>
        <note>4Fe-4S-S-AdoMet</note>
    </ligand>
</feature>
<feature type="binding site" evidence="1">
    <location>
        <position position="584"/>
    </location>
    <ligand>
        <name>[4Fe-4S] cluster</name>
        <dbReference type="ChEBI" id="CHEBI:49883"/>
        <note>4Fe-4S-S-AdoMet</note>
    </ligand>
</feature>
<feature type="binding site" evidence="1">
    <location>
        <position position="589"/>
    </location>
    <ligand>
        <name>[4Fe-4S] cluster</name>
        <dbReference type="ChEBI" id="CHEBI:49883"/>
        <note>4Fe-4S-S-AdoMet</note>
    </ligand>
</feature>
<gene>
    <name evidence="1" type="primary">thiC</name>
    <name type="ordered locus">c4951</name>
</gene>
<keyword id="KW-0004">4Fe-4S</keyword>
<keyword id="KW-0408">Iron</keyword>
<keyword id="KW-0411">Iron-sulfur</keyword>
<keyword id="KW-0456">Lyase</keyword>
<keyword id="KW-0479">Metal-binding</keyword>
<keyword id="KW-1185">Reference proteome</keyword>
<keyword id="KW-0949">S-adenosyl-L-methionine</keyword>
<keyword id="KW-0784">Thiamine biosynthesis</keyword>
<keyword id="KW-0862">Zinc</keyword>
<organism>
    <name type="scientific">Escherichia coli O6:H1 (strain CFT073 / ATCC 700928 / UPEC)</name>
    <dbReference type="NCBI Taxonomy" id="199310"/>
    <lineage>
        <taxon>Bacteria</taxon>
        <taxon>Pseudomonadati</taxon>
        <taxon>Pseudomonadota</taxon>
        <taxon>Gammaproteobacteria</taxon>
        <taxon>Enterobacterales</taxon>
        <taxon>Enterobacteriaceae</taxon>
        <taxon>Escherichia</taxon>
    </lineage>
</organism>